<reference key="1">
    <citation type="submission" date="2006-08" db="EMBL/GenBank/DDBJ databases">
        <title>Complete sequence of chromosome 1 of Burkholderia cepacia AMMD.</title>
        <authorList>
            <person name="Copeland A."/>
            <person name="Lucas S."/>
            <person name="Lapidus A."/>
            <person name="Barry K."/>
            <person name="Detter J.C."/>
            <person name="Glavina del Rio T."/>
            <person name="Hammon N."/>
            <person name="Israni S."/>
            <person name="Pitluck S."/>
            <person name="Bruce D."/>
            <person name="Chain P."/>
            <person name="Malfatti S."/>
            <person name="Shin M."/>
            <person name="Vergez L."/>
            <person name="Schmutz J."/>
            <person name="Larimer F."/>
            <person name="Land M."/>
            <person name="Hauser L."/>
            <person name="Kyrpides N."/>
            <person name="Kim E."/>
            <person name="Parke J."/>
            <person name="Coenye T."/>
            <person name="Konstantinidis K."/>
            <person name="Ramette A."/>
            <person name="Tiedje J."/>
            <person name="Richardson P."/>
        </authorList>
    </citation>
    <scope>NUCLEOTIDE SEQUENCE [LARGE SCALE GENOMIC DNA]</scope>
    <source>
        <strain>ATCC BAA-244 / DSM 16087 / CCUG 44356 / LMG 19182 / AMMD</strain>
    </source>
</reference>
<keyword id="KW-0687">Ribonucleoprotein</keyword>
<keyword id="KW-0689">Ribosomal protein</keyword>
<keyword id="KW-0694">RNA-binding</keyword>
<keyword id="KW-0699">rRNA-binding</keyword>
<keyword id="KW-0820">tRNA-binding</keyword>
<name>RS13_BURCM</name>
<feature type="chain" id="PRO_0000306577" description="Small ribosomal subunit protein uS13">
    <location>
        <begin position="1"/>
        <end position="121"/>
    </location>
</feature>
<feature type="region of interest" description="Disordered" evidence="2">
    <location>
        <begin position="93"/>
        <end position="121"/>
    </location>
</feature>
<proteinExistence type="inferred from homology"/>
<evidence type="ECO:0000255" key="1">
    <source>
        <dbReference type="HAMAP-Rule" id="MF_01315"/>
    </source>
</evidence>
<evidence type="ECO:0000256" key="2">
    <source>
        <dbReference type="SAM" id="MobiDB-lite"/>
    </source>
</evidence>
<evidence type="ECO:0000305" key="3"/>
<sequence length="121" mass="13640">MARIAGVNIPNHQHTEIGLTAIFGIGRTRSRSICSAAGVEFSKKVKDLTDADLEKLREEVGKFIVEGDLRREVTMNIKRLMDLGCYRGVRHRKGLPMRGQRTRTNARTRKGPRRAAQALKK</sequence>
<accession>Q0BJ23</accession>
<protein>
    <recommendedName>
        <fullName evidence="1">Small ribosomal subunit protein uS13</fullName>
    </recommendedName>
    <alternativeName>
        <fullName evidence="3">30S ribosomal protein S13</fullName>
    </alternativeName>
</protein>
<comment type="function">
    <text evidence="1">Located at the top of the head of the 30S subunit, it contacts several helices of the 16S rRNA. In the 70S ribosome it contacts the 23S rRNA (bridge B1a) and protein L5 of the 50S subunit (bridge B1b), connecting the 2 subunits; these bridges are implicated in subunit movement. Contacts the tRNAs in the A and P-sites.</text>
</comment>
<comment type="subunit">
    <text evidence="1">Part of the 30S ribosomal subunit. Forms a loose heterodimer with protein S19. Forms two bridges to the 50S subunit in the 70S ribosome.</text>
</comment>
<comment type="similarity">
    <text evidence="1">Belongs to the universal ribosomal protein uS13 family.</text>
</comment>
<organism>
    <name type="scientific">Burkholderia ambifaria (strain ATCC BAA-244 / DSM 16087 / CCUG 44356 / LMG 19182 / AMMD)</name>
    <name type="common">Burkholderia cepacia (strain AMMD)</name>
    <dbReference type="NCBI Taxonomy" id="339670"/>
    <lineage>
        <taxon>Bacteria</taxon>
        <taxon>Pseudomonadati</taxon>
        <taxon>Pseudomonadota</taxon>
        <taxon>Betaproteobacteria</taxon>
        <taxon>Burkholderiales</taxon>
        <taxon>Burkholderiaceae</taxon>
        <taxon>Burkholderia</taxon>
        <taxon>Burkholderia cepacia complex</taxon>
    </lineage>
</organism>
<dbReference type="EMBL" id="CP000440">
    <property type="protein sequence ID" value="ABI85850.1"/>
    <property type="molecule type" value="Genomic_DNA"/>
</dbReference>
<dbReference type="RefSeq" id="WP_006752933.1">
    <property type="nucleotide sequence ID" value="NZ_CP009798.1"/>
</dbReference>
<dbReference type="SMR" id="Q0BJ23"/>
<dbReference type="GeneID" id="93084295"/>
<dbReference type="KEGG" id="bam:Bamb_0290"/>
<dbReference type="PATRIC" id="fig|339670.21.peg.1330"/>
<dbReference type="eggNOG" id="COG0099">
    <property type="taxonomic scope" value="Bacteria"/>
</dbReference>
<dbReference type="Proteomes" id="UP000000662">
    <property type="component" value="Chromosome 1"/>
</dbReference>
<dbReference type="GO" id="GO:0005829">
    <property type="term" value="C:cytosol"/>
    <property type="evidence" value="ECO:0007669"/>
    <property type="project" value="TreeGrafter"/>
</dbReference>
<dbReference type="GO" id="GO:0015935">
    <property type="term" value="C:small ribosomal subunit"/>
    <property type="evidence" value="ECO:0007669"/>
    <property type="project" value="TreeGrafter"/>
</dbReference>
<dbReference type="GO" id="GO:0019843">
    <property type="term" value="F:rRNA binding"/>
    <property type="evidence" value="ECO:0007669"/>
    <property type="project" value="UniProtKB-UniRule"/>
</dbReference>
<dbReference type="GO" id="GO:0003735">
    <property type="term" value="F:structural constituent of ribosome"/>
    <property type="evidence" value="ECO:0007669"/>
    <property type="project" value="InterPro"/>
</dbReference>
<dbReference type="GO" id="GO:0000049">
    <property type="term" value="F:tRNA binding"/>
    <property type="evidence" value="ECO:0007669"/>
    <property type="project" value="UniProtKB-UniRule"/>
</dbReference>
<dbReference type="GO" id="GO:0006412">
    <property type="term" value="P:translation"/>
    <property type="evidence" value="ECO:0007669"/>
    <property type="project" value="UniProtKB-UniRule"/>
</dbReference>
<dbReference type="FunFam" id="1.10.8.50:FF:000001">
    <property type="entry name" value="30S ribosomal protein S13"/>
    <property type="match status" value="1"/>
</dbReference>
<dbReference type="FunFam" id="4.10.910.10:FF:000001">
    <property type="entry name" value="30S ribosomal protein S13"/>
    <property type="match status" value="1"/>
</dbReference>
<dbReference type="Gene3D" id="1.10.8.50">
    <property type="match status" value="1"/>
</dbReference>
<dbReference type="Gene3D" id="4.10.910.10">
    <property type="entry name" value="30s ribosomal protein s13, domain 2"/>
    <property type="match status" value="1"/>
</dbReference>
<dbReference type="HAMAP" id="MF_01315">
    <property type="entry name" value="Ribosomal_uS13"/>
    <property type="match status" value="1"/>
</dbReference>
<dbReference type="InterPro" id="IPR027437">
    <property type="entry name" value="Rbsml_uS13_C"/>
</dbReference>
<dbReference type="InterPro" id="IPR001892">
    <property type="entry name" value="Ribosomal_uS13"/>
</dbReference>
<dbReference type="InterPro" id="IPR010979">
    <property type="entry name" value="Ribosomal_uS13-like_H2TH"/>
</dbReference>
<dbReference type="InterPro" id="IPR019980">
    <property type="entry name" value="Ribosomal_uS13_bac-type"/>
</dbReference>
<dbReference type="InterPro" id="IPR018269">
    <property type="entry name" value="Ribosomal_uS13_CS"/>
</dbReference>
<dbReference type="NCBIfam" id="TIGR03631">
    <property type="entry name" value="uS13_bact"/>
    <property type="match status" value="1"/>
</dbReference>
<dbReference type="PANTHER" id="PTHR10871">
    <property type="entry name" value="30S RIBOSOMAL PROTEIN S13/40S RIBOSOMAL PROTEIN S18"/>
    <property type="match status" value="1"/>
</dbReference>
<dbReference type="PANTHER" id="PTHR10871:SF1">
    <property type="entry name" value="SMALL RIBOSOMAL SUBUNIT PROTEIN US13M"/>
    <property type="match status" value="1"/>
</dbReference>
<dbReference type="Pfam" id="PF00416">
    <property type="entry name" value="Ribosomal_S13"/>
    <property type="match status" value="1"/>
</dbReference>
<dbReference type="PIRSF" id="PIRSF002134">
    <property type="entry name" value="Ribosomal_S13"/>
    <property type="match status" value="1"/>
</dbReference>
<dbReference type="SUPFAM" id="SSF46946">
    <property type="entry name" value="S13-like H2TH domain"/>
    <property type="match status" value="1"/>
</dbReference>
<dbReference type="PROSITE" id="PS00646">
    <property type="entry name" value="RIBOSOMAL_S13_1"/>
    <property type="match status" value="1"/>
</dbReference>
<dbReference type="PROSITE" id="PS50159">
    <property type="entry name" value="RIBOSOMAL_S13_2"/>
    <property type="match status" value="1"/>
</dbReference>
<gene>
    <name evidence="1" type="primary">rpsM</name>
    <name type="ordered locus">Bamb_0290</name>
</gene>